<protein>
    <recommendedName>
        <fullName>Erythropoietin</fullName>
    </recommendedName>
</protein>
<sequence length="192" mass="21090">MGARDCTPLLMLSFLLFPLGFPVLGAPARLICDSRVLERYILEAREAENATMGCAEGCSFNENITVPDTKVNFYAWKRMEVQQQAQEVWQGLALLSEAILRGQALLANASQPCEALRLHVDKAVSGLRSLTSLLRALGAQKEAISLPDATPSAAPLRAFTVDALSKLFRIYSNFLRGKLTLYTGEACRRGDR</sequence>
<evidence type="ECO:0000250" key="1"/>
<evidence type="ECO:0000250" key="2">
    <source>
        <dbReference type="UniProtKB" id="P01588"/>
    </source>
</evidence>
<evidence type="ECO:0000255" key="3"/>
<evidence type="ECO:0000269" key="4">
    <source ref="1"/>
</evidence>
<evidence type="ECO:0000305" key="5"/>
<proteinExistence type="evidence at transcript level"/>
<feature type="signal peptide" evidence="3">
    <location>
        <begin position="1"/>
        <end position="25"/>
    </location>
</feature>
<feature type="chain" id="PRO_0000313662" description="Erythropoietin">
    <location>
        <begin position="26"/>
        <end position="192"/>
    </location>
</feature>
<feature type="glycosylation site" description="N-linked (GlcNAc...) asparagine" evidence="3">
    <location>
        <position position="49"/>
    </location>
</feature>
<feature type="glycosylation site" description="N-linked (GlcNAc...) asparagine" evidence="3">
    <location>
        <position position="63"/>
    </location>
</feature>
<feature type="glycosylation site" description="N-linked (GlcNAc...) asparagine" evidence="3">
    <location>
        <position position="108"/>
    </location>
</feature>
<feature type="disulfide bond" evidence="1">
    <location>
        <begin position="32"/>
        <end position="187"/>
    </location>
</feature>
<feature type="disulfide bond" evidence="1">
    <location>
        <begin position="54"/>
        <end position="58"/>
    </location>
</feature>
<feature type="sequence variant" description="In strain: JiuLong." evidence="4">
    <original>Q</original>
    <variation>L</variation>
    <location>
        <position position="86"/>
    </location>
</feature>
<keyword id="KW-1015">Disulfide bond</keyword>
<keyword id="KW-0265">Erythrocyte maturation</keyword>
<keyword id="KW-0325">Glycoprotein</keyword>
<keyword id="KW-0372">Hormone</keyword>
<keyword id="KW-1185">Reference proteome</keyword>
<keyword id="KW-0964">Secreted</keyword>
<keyword id="KW-0732">Signal</keyword>
<comment type="function">
    <text evidence="2">Hormone involved in the regulation of erythrocyte proliferation and differentiation and the maintenance of a physiological level of circulating erythrocyte mass. Binds to EPOR leading to EPOR dimerization and JAK2 activation thereby activating specific downstream effectors, including STAT1 and STAT3.</text>
</comment>
<comment type="subcellular location">
    <subcellularLocation>
        <location evidence="1">Secreted</location>
    </subcellularLocation>
</comment>
<comment type="tissue specificity">
    <text>Produced by kidney or liver of adult mammals and by liver of fetal or neonatal mammals.</text>
</comment>
<comment type="similarity">
    <text evidence="5">Belongs to the EPO/TPO family.</text>
</comment>
<dbReference type="EMBL" id="EF374047">
    <property type="protein sequence ID" value="ABN48307.1"/>
    <property type="molecule type" value="Genomic_DNA"/>
</dbReference>
<dbReference type="EMBL" id="EF374048">
    <property type="protein sequence ID" value="ABN48308.1"/>
    <property type="molecule type" value="Genomic_DNA"/>
</dbReference>
<dbReference type="EMBL" id="EF405921">
    <property type="protein sequence ID" value="ABN59378.1"/>
    <property type="molecule type" value="Genomic_DNA"/>
</dbReference>
<dbReference type="SMR" id="A3FFS8"/>
<dbReference type="GlyCosmos" id="A3FFS8">
    <property type="glycosylation" value="3 sites, No reported glycans"/>
</dbReference>
<dbReference type="Ensembl" id="ENSBGRT00000035954.1">
    <property type="protein sequence ID" value="ENSBGRP00000031084.1"/>
    <property type="gene ID" value="ENSBGRG00000019517.1"/>
</dbReference>
<dbReference type="Ensembl" id="ENSBGRT00000036028.1">
    <property type="protein sequence ID" value="ENSBGRP00000031151.1"/>
    <property type="gene ID" value="ENSBGRG00000019517.1"/>
</dbReference>
<dbReference type="GeneTree" id="ENSGT00390000017226"/>
<dbReference type="Proteomes" id="UP000694520">
    <property type="component" value="Chromosome 26"/>
</dbReference>
<dbReference type="GO" id="GO:0009986">
    <property type="term" value="C:cell surface"/>
    <property type="evidence" value="ECO:0007669"/>
    <property type="project" value="Ensembl"/>
</dbReference>
<dbReference type="GO" id="GO:0005615">
    <property type="term" value="C:extracellular space"/>
    <property type="evidence" value="ECO:0007669"/>
    <property type="project" value="Ensembl"/>
</dbReference>
<dbReference type="GO" id="GO:0005125">
    <property type="term" value="F:cytokine activity"/>
    <property type="evidence" value="ECO:0007669"/>
    <property type="project" value="Ensembl"/>
</dbReference>
<dbReference type="GO" id="GO:0005128">
    <property type="term" value="F:erythropoietin receptor binding"/>
    <property type="evidence" value="ECO:0000250"/>
    <property type="project" value="UniProtKB"/>
</dbReference>
<dbReference type="GO" id="GO:0005179">
    <property type="term" value="F:hormone activity"/>
    <property type="evidence" value="ECO:0007669"/>
    <property type="project" value="UniProtKB-KW"/>
</dbReference>
<dbReference type="GO" id="GO:0030295">
    <property type="term" value="F:protein kinase activator activity"/>
    <property type="evidence" value="ECO:0007669"/>
    <property type="project" value="Ensembl"/>
</dbReference>
<dbReference type="GO" id="GO:0097696">
    <property type="term" value="P:cell surface receptor signaling pathway via STAT"/>
    <property type="evidence" value="ECO:0007669"/>
    <property type="project" value="Ensembl"/>
</dbReference>
<dbReference type="GO" id="GO:0071474">
    <property type="term" value="P:cellular hyperosmotic response"/>
    <property type="evidence" value="ECO:0007669"/>
    <property type="project" value="Ensembl"/>
</dbReference>
<dbReference type="GO" id="GO:0007566">
    <property type="term" value="P:embryo implantation"/>
    <property type="evidence" value="ECO:0007669"/>
    <property type="project" value="Ensembl"/>
</dbReference>
<dbReference type="GO" id="GO:0030218">
    <property type="term" value="P:erythrocyte differentiation"/>
    <property type="evidence" value="ECO:0000250"/>
    <property type="project" value="UniProtKB"/>
</dbReference>
<dbReference type="GO" id="GO:0043249">
    <property type="term" value="P:erythrocyte maturation"/>
    <property type="evidence" value="ECO:0007669"/>
    <property type="project" value="UniProtKB-KW"/>
</dbReference>
<dbReference type="GO" id="GO:0038162">
    <property type="term" value="P:erythropoietin-mediated signaling pathway"/>
    <property type="evidence" value="ECO:0000250"/>
    <property type="project" value="UniProtKB"/>
</dbReference>
<dbReference type="GO" id="GO:0042541">
    <property type="term" value="P:hemoglobin biosynthetic process"/>
    <property type="evidence" value="ECO:0007669"/>
    <property type="project" value="Ensembl"/>
</dbReference>
<dbReference type="GO" id="GO:0033028">
    <property type="term" value="P:myeloid cell apoptotic process"/>
    <property type="evidence" value="ECO:0007669"/>
    <property type="project" value="Ensembl"/>
</dbReference>
<dbReference type="GO" id="GO:0010523">
    <property type="term" value="P:negative regulation of calcium ion transport into cytosol"/>
    <property type="evidence" value="ECO:0007669"/>
    <property type="project" value="Ensembl"/>
</dbReference>
<dbReference type="GO" id="GO:1902251">
    <property type="term" value="P:negative regulation of erythrocyte apoptotic process"/>
    <property type="evidence" value="ECO:0007669"/>
    <property type="project" value="Ensembl"/>
</dbReference>
<dbReference type="GO" id="GO:1902219">
    <property type="term" value="P:negative regulation of intrinsic apoptotic signaling pathway in response to osmotic stress"/>
    <property type="evidence" value="ECO:0007669"/>
    <property type="project" value="Ensembl"/>
</dbReference>
<dbReference type="GO" id="GO:0000122">
    <property type="term" value="P:negative regulation of transcription by RNA polymerase II"/>
    <property type="evidence" value="ECO:0007669"/>
    <property type="project" value="Ensembl"/>
</dbReference>
<dbReference type="GO" id="GO:0008284">
    <property type="term" value="P:positive regulation of cell population proliferation"/>
    <property type="evidence" value="ECO:0007669"/>
    <property type="project" value="Ensembl"/>
</dbReference>
<dbReference type="GO" id="GO:0045893">
    <property type="term" value="P:positive regulation of DNA-templated transcription"/>
    <property type="evidence" value="ECO:0007669"/>
    <property type="project" value="Ensembl"/>
</dbReference>
<dbReference type="GO" id="GO:0046579">
    <property type="term" value="P:positive regulation of Ras protein signal transduction"/>
    <property type="evidence" value="ECO:0007669"/>
    <property type="project" value="Ensembl"/>
</dbReference>
<dbReference type="GO" id="GO:0001666">
    <property type="term" value="P:response to hypoxia"/>
    <property type="evidence" value="ECO:0007669"/>
    <property type="project" value="Ensembl"/>
</dbReference>
<dbReference type="FunFam" id="1.20.1250.10:FF:000013">
    <property type="entry name" value="Erythropoietin"/>
    <property type="match status" value="1"/>
</dbReference>
<dbReference type="Gene3D" id="1.20.1250.10">
    <property type="match status" value="1"/>
</dbReference>
<dbReference type="InterPro" id="IPR009079">
    <property type="entry name" value="4_helix_cytokine-like_core"/>
</dbReference>
<dbReference type="InterPro" id="IPR019767">
    <property type="entry name" value="EPO/TPO_CS"/>
</dbReference>
<dbReference type="InterPro" id="IPR001323">
    <property type="entry name" value="EPO_TPO"/>
</dbReference>
<dbReference type="InterPro" id="IPR003013">
    <property type="entry name" value="Erythroptn"/>
</dbReference>
<dbReference type="PANTHER" id="PTHR10370">
    <property type="entry name" value="ERYTHROPOIETIN"/>
    <property type="match status" value="1"/>
</dbReference>
<dbReference type="PANTHER" id="PTHR10370:SF0">
    <property type="entry name" value="ERYTHROPOIETIN"/>
    <property type="match status" value="1"/>
</dbReference>
<dbReference type="Pfam" id="PF00758">
    <property type="entry name" value="EPO_TPO"/>
    <property type="match status" value="1"/>
</dbReference>
<dbReference type="PIRSF" id="PIRSF001951">
    <property type="entry name" value="EPO"/>
    <property type="match status" value="1"/>
</dbReference>
<dbReference type="PRINTS" id="PR00272">
    <property type="entry name" value="ERYTHROPTN"/>
</dbReference>
<dbReference type="SUPFAM" id="SSF47266">
    <property type="entry name" value="4-helical cytokines"/>
    <property type="match status" value="1"/>
</dbReference>
<dbReference type="PROSITE" id="PS00817">
    <property type="entry name" value="EPO_TPO"/>
    <property type="match status" value="1"/>
</dbReference>
<organism>
    <name type="scientific">Bos mutus grunniens</name>
    <name type="common">Wild yak</name>
    <name type="synonym">Bos grunniens</name>
    <dbReference type="NCBI Taxonomy" id="30521"/>
    <lineage>
        <taxon>Eukaryota</taxon>
        <taxon>Metazoa</taxon>
        <taxon>Chordata</taxon>
        <taxon>Craniata</taxon>
        <taxon>Vertebrata</taxon>
        <taxon>Euteleostomi</taxon>
        <taxon>Mammalia</taxon>
        <taxon>Eutheria</taxon>
        <taxon>Laurasiatheria</taxon>
        <taxon>Artiodactyla</taxon>
        <taxon>Ruminantia</taxon>
        <taxon>Pecora</taxon>
        <taxon>Bovidae</taxon>
        <taxon>Bovinae</taxon>
        <taxon>Bos</taxon>
    </lineage>
</organism>
<name>EPO_BOSMU</name>
<reference key="1">
    <citation type="submission" date="2007-01" db="EMBL/GenBank/DDBJ databases">
        <title>Cloning and sequence analysis on erythropoietin (EPO) gene of Bos grunniens.</title>
        <authorList>
            <person name="Jin S."/>
            <person name="Zhong J.C."/>
            <person name="Chen Z.H."/>
            <person name="Zhuo Y."/>
        </authorList>
    </citation>
    <scope>NUCLEOTIDE SEQUENCE [GENOMIC DNA]</scope>
    <scope>VARIANT LEU-86</scope>
    <source>
        <strain>BaZhou</strain>
        <strain>DaTong</strain>
        <strain>JiuLong</strain>
    </source>
</reference>
<gene>
    <name type="primary">EPO</name>
</gene>
<accession>A3FFS8</accession>
<accession>A3FM64</accession>